<name>Y3711_DICDI</name>
<keyword id="KW-1185">Reference proteome</keyword>
<evidence type="ECO:0000256" key="1">
    <source>
        <dbReference type="SAM" id="MobiDB-lite"/>
    </source>
</evidence>
<dbReference type="EMBL" id="AAFI02000035">
    <property type="protein sequence ID" value="EAL67388.2"/>
    <property type="molecule type" value="Genomic_DNA"/>
</dbReference>
<dbReference type="RefSeq" id="XP_641375.2">
    <property type="nucleotide sequence ID" value="XM_636283.2"/>
</dbReference>
<dbReference type="PaxDb" id="44689-DDB0233711"/>
<dbReference type="EnsemblProtists" id="EAL67388">
    <property type="protein sequence ID" value="EAL67388"/>
    <property type="gene ID" value="DDB_G0280323"/>
</dbReference>
<dbReference type="GeneID" id="8622509"/>
<dbReference type="KEGG" id="ddi:DDB_G0280323"/>
<dbReference type="dictyBase" id="DDB_G0280323"/>
<dbReference type="HOGENOM" id="CLU_3161077_0_0_1"/>
<dbReference type="InParanoid" id="Q54VI0"/>
<dbReference type="PRO" id="PR:Q54VI0"/>
<dbReference type="Proteomes" id="UP000002195">
    <property type="component" value="Chromosome 3"/>
</dbReference>
<reference key="1">
    <citation type="journal article" date="2005" name="Nature">
        <title>The genome of the social amoeba Dictyostelium discoideum.</title>
        <authorList>
            <person name="Eichinger L."/>
            <person name="Pachebat J.A."/>
            <person name="Gloeckner G."/>
            <person name="Rajandream M.A."/>
            <person name="Sucgang R."/>
            <person name="Berriman M."/>
            <person name="Song J."/>
            <person name="Olsen R."/>
            <person name="Szafranski K."/>
            <person name="Xu Q."/>
            <person name="Tunggal B."/>
            <person name="Kummerfeld S."/>
            <person name="Madera M."/>
            <person name="Konfortov B.A."/>
            <person name="Rivero F."/>
            <person name="Bankier A.T."/>
            <person name="Lehmann R."/>
            <person name="Hamlin N."/>
            <person name="Davies R."/>
            <person name="Gaudet P."/>
            <person name="Fey P."/>
            <person name="Pilcher K."/>
            <person name="Chen G."/>
            <person name="Saunders D."/>
            <person name="Sodergren E.J."/>
            <person name="Davis P."/>
            <person name="Kerhornou A."/>
            <person name="Nie X."/>
            <person name="Hall N."/>
            <person name="Anjard C."/>
            <person name="Hemphill L."/>
            <person name="Bason N."/>
            <person name="Farbrother P."/>
            <person name="Desany B."/>
            <person name="Just E."/>
            <person name="Morio T."/>
            <person name="Rost R."/>
            <person name="Churcher C.M."/>
            <person name="Cooper J."/>
            <person name="Haydock S."/>
            <person name="van Driessche N."/>
            <person name="Cronin A."/>
            <person name="Goodhead I."/>
            <person name="Muzny D.M."/>
            <person name="Mourier T."/>
            <person name="Pain A."/>
            <person name="Lu M."/>
            <person name="Harper D."/>
            <person name="Lindsay R."/>
            <person name="Hauser H."/>
            <person name="James K.D."/>
            <person name="Quiles M."/>
            <person name="Madan Babu M."/>
            <person name="Saito T."/>
            <person name="Buchrieser C."/>
            <person name="Wardroper A."/>
            <person name="Felder M."/>
            <person name="Thangavelu M."/>
            <person name="Johnson D."/>
            <person name="Knights A."/>
            <person name="Loulseged H."/>
            <person name="Mungall K.L."/>
            <person name="Oliver K."/>
            <person name="Price C."/>
            <person name="Quail M.A."/>
            <person name="Urushihara H."/>
            <person name="Hernandez J."/>
            <person name="Rabbinowitsch E."/>
            <person name="Steffen D."/>
            <person name="Sanders M."/>
            <person name="Ma J."/>
            <person name="Kohara Y."/>
            <person name="Sharp S."/>
            <person name="Simmonds M.N."/>
            <person name="Spiegler S."/>
            <person name="Tivey A."/>
            <person name="Sugano S."/>
            <person name="White B."/>
            <person name="Walker D."/>
            <person name="Woodward J.R."/>
            <person name="Winckler T."/>
            <person name="Tanaka Y."/>
            <person name="Shaulsky G."/>
            <person name="Schleicher M."/>
            <person name="Weinstock G.M."/>
            <person name="Rosenthal A."/>
            <person name="Cox E.C."/>
            <person name="Chisholm R.L."/>
            <person name="Gibbs R.A."/>
            <person name="Loomis W.F."/>
            <person name="Platzer M."/>
            <person name="Kay R.R."/>
            <person name="Williams J.G."/>
            <person name="Dear P.H."/>
            <person name="Noegel A.A."/>
            <person name="Barrell B.G."/>
            <person name="Kuspa A."/>
        </authorList>
    </citation>
    <scope>NUCLEOTIDE SEQUENCE [LARGE SCALE GENOMIC DNA]</scope>
    <source>
        <strain>AX4</strain>
    </source>
</reference>
<organism>
    <name type="scientific">Dictyostelium discoideum</name>
    <name type="common">Social amoeba</name>
    <dbReference type="NCBI Taxonomy" id="44689"/>
    <lineage>
        <taxon>Eukaryota</taxon>
        <taxon>Amoebozoa</taxon>
        <taxon>Evosea</taxon>
        <taxon>Eumycetozoa</taxon>
        <taxon>Dictyostelia</taxon>
        <taxon>Dictyosteliales</taxon>
        <taxon>Dictyosteliaceae</taxon>
        <taxon>Dictyostelium</taxon>
    </lineage>
</organism>
<gene>
    <name type="ORF">DDB_G0280323</name>
</gene>
<feature type="chain" id="PRO_0000352395" description="Uncharacterized protein DDB_G0280323">
    <location>
        <begin position="1"/>
        <end position="48"/>
    </location>
</feature>
<feature type="region of interest" description="Disordered" evidence="1">
    <location>
        <begin position="1"/>
        <end position="48"/>
    </location>
</feature>
<feature type="compositionally biased region" description="Low complexity" evidence="1">
    <location>
        <begin position="21"/>
        <end position="36"/>
    </location>
</feature>
<feature type="compositionally biased region" description="Gly residues" evidence="1">
    <location>
        <begin position="37"/>
        <end position="48"/>
    </location>
</feature>
<protein>
    <recommendedName>
        <fullName>Uncharacterized protein DDB_G0280323</fullName>
    </recommendedName>
</protein>
<accession>Q54VI0</accession>
<proteinExistence type="predicted"/>
<sequence length="48" mass="4897">MTKIPINIPATSGKIKFGITPSSNKSPSLSPSPSNGQLGGGRGYILEP</sequence>